<comment type="function">
    <text evidence="1">Catalyzes the synthesis of the hydroxymethylpyrimidine phosphate (HMP-P) moiety of thiamine from aminoimidazole ribotide (AIR) in a radical S-adenosyl-L-methionine (SAM)-dependent reaction.</text>
</comment>
<comment type="catalytic activity">
    <reaction evidence="1">
        <text>5-amino-1-(5-phospho-beta-D-ribosyl)imidazole + S-adenosyl-L-methionine = 4-amino-2-methyl-5-(phosphooxymethyl)pyrimidine + CO + 5'-deoxyadenosine + formate + L-methionine + 3 H(+)</text>
        <dbReference type="Rhea" id="RHEA:24840"/>
        <dbReference type="ChEBI" id="CHEBI:15378"/>
        <dbReference type="ChEBI" id="CHEBI:15740"/>
        <dbReference type="ChEBI" id="CHEBI:17245"/>
        <dbReference type="ChEBI" id="CHEBI:17319"/>
        <dbReference type="ChEBI" id="CHEBI:57844"/>
        <dbReference type="ChEBI" id="CHEBI:58354"/>
        <dbReference type="ChEBI" id="CHEBI:59789"/>
        <dbReference type="ChEBI" id="CHEBI:137981"/>
        <dbReference type="EC" id="4.1.99.17"/>
    </reaction>
</comment>
<comment type="cofactor">
    <cofactor evidence="1">
        <name>[4Fe-4S] cluster</name>
        <dbReference type="ChEBI" id="CHEBI:49883"/>
    </cofactor>
    <text evidence="1">Binds 1 [4Fe-4S] cluster per subunit. The cluster is coordinated with 3 cysteines and an exchangeable S-adenosyl-L-methionine.</text>
</comment>
<comment type="pathway">
    <text evidence="1">Cofactor biosynthesis; thiamine diphosphate biosynthesis.</text>
</comment>
<comment type="subunit">
    <text evidence="1">Homodimer.</text>
</comment>
<comment type="similarity">
    <text evidence="1">Belongs to the ThiC family.</text>
</comment>
<name>THIC_RHOPT</name>
<sequence length="641" mass="70366">MNIRSNPETTRAAVTTGALPSSKKIYATPASAPDLRVPLREIILSEGAGEPNLPVYDTSGPYTDPTVVIDVNKGLPRPRTEWVKQRGGVEQYEGRDIKPEDNGNVGAAHAAKAFTAHHQPLRGISDAPITQYEFARRGIITKEMIYVAERENLGRKQQLERAEAALADGESFGAAVPAFITPEFVRDEIARGRAIIPANINHGELEPMIIGRNFLTKINANIGNSAVTSSVEEEVDKMVWAIRWGADTVMDLSTGRNIHTTREWILRNSPVPIGTVPIYQALEKCEGDPVKLTWELYKDTLIEQAEQGVDYFTIHAGVRLQYIHLTASRVTGIVSRGGSIMAKWCLAHHKESFLYTHFDEICDLMRKYDVSFSLGDGLRPGSIADANDRAQFAELETLGELTKIAWAKGCQVMIEGPGHVPMHKIKINMDKQLKECGEAPFYTLGPLTTDIAPGYDHITSGIGAAMIGWFGCAMLCYVTPKEHLGLPDRNDVKTGVITYKIAAHAADLAKGHPAAQLRDDALSRARFEFRWQDQFNLGLDPDTAQAFHDETLPKDAHKVAHFCSMCGPKFCSMKITQDVRDYAAGLGDNEKAALYPVGHAGMTISGTIEDGMAQMSAKFKEMGSSVYLDADKVKESNKALS</sequence>
<proteinExistence type="inferred from homology"/>
<dbReference type="EC" id="4.1.99.17" evidence="1"/>
<dbReference type="EMBL" id="CP001096">
    <property type="protein sequence ID" value="ACF02592.1"/>
    <property type="molecule type" value="Genomic_DNA"/>
</dbReference>
<dbReference type="RefSeq" id="WP_012497004.1">
    <property type="nucleotide sequence ID" value="NC_011004.1"/>
</dbReference>
<dbReference type="SMR" id="B3QFS9"/>
<dbReference type="KEGG" id="rpt:Rpal_4096"/>
<dbReference type="HOGENOM" id="CLU_013181_2_1_5"/>
<dbReference type="OrthoDB" id="9805897at2"/>
<dbReference type="UniPathway" id="UPA00060"/>
<dbReference type="Proteomes" id="UP000001725">
    <property type="component" value="Chromosome"/>
</dbReference>
<dbReference type="GO" id="GO:0005829">
    <property type="term" value="C:cytosol"/>
    <property type="evidence" value="ECO:0007669"/>
    <property type="project" value="TreeGrafter"/>
</dbReference>
<dbReference type="GO" id="GO:0051539">
    <property type="term" value="F:4 iron, 4 sulfur cluster binding"/>
    <property type="evidence" value="ECO:0007669"/>
    <property type="project" value="UniProtKB-KW"/>
</dbReference>
<dbReference type="GO" id="GO:0016830">
    <property type="term" value="F:carbon-carbon lyase activity"/>
    <property type="evidence" value="ECO:0007669"/>
    <property type="project" value="InterPro"/>
</dbReference>
<dbReference type="GO" id="GO:0008270">
    <property type="term" value="F:zinc ion binding"/>
    <property type="evidence" value="ECO:0007669"/>
    <property type="project" value="UniProtKB-UniRule"/>
</dbReference>
<dbReference type="GO" id="GO:0009228">
    <property type="term" value="P:thiamine biosynthetic process"/>
    <property type="evidence" value="ECO:0007669"/>
    <property type="project" value="UniProtKB-KW"/>
</dbReference>
<dbReference type="GO" id="GO:0009229">
    <property type="term" value="P:thiamine diphosphate biosynthetic process"/>
    <property type="evidence" value="ECO:0007669"/>
    <property type="project" value="UniProtKB-UniRule"/>
</dbReference>
<dbReference type="FunFam" id="3.20.20.540:FF:000001">
    <property type="entry name" value="Phosphomethylpyrimidine synthase"/>
    <property type="match status" value="1"/>
</dbReference>
<dbReference type="Gene3D" id="6.10.250.620">
    <property type="match status" value="1"/>
</dbReference>
<dbReference type="Gene3D" id="3.20.20.540">
    <property type="entry name" value="Radical SAM ThiC family, central domain"/>
    <property type="match status" value="1"/>
</dbReference>
<dbReference type="HAMAP" id="MF_00089">
    <property type="entry name" value="ThiC"/>
    <property type="match status" value="1"/>
</dbReference>
<dbReference type="InterPro" id="IPR037509">
    <property type="entry name" value="ThiC"/>
</dbReference>
<dbReference type="InterPro" id="IPR025747">
    <property type="entry name" value="ThiC-associated_dom"/>
</dbReference>
<dbReference type="InterPro" id="IPR038521">
    <property type="entry name" value="ThiC/Bza_core_dom"/>
</dbReference>
<dbReference type="InterPro" id="IPR002817">
    <property type="entry name" value="ThiC/BzaA/B"/>
</dbReference>
<dbReference type="NCBIfam" id="NF006763">
    <property type="entry name" value="PRK09284.1"/>
    <property type="match status" value="1"/>
</dbReference>
<dbReference type="NCBIfam" id="NF009895">
    <property type="entry name" value="PRK13352.1"/>
    <property type="match status" value="1"/>
</dbReference>
<dbReference type="NCBIfam" id="TIGR00190">
    <property type="entry name" value="thiC"/>
    <property type="match status" value="1"/>
</dbReference>
<dbReference type="PANTHER" id="PTHR30557:SF1">
    <property type="entry name" value="PHOSPHOMETHYLPYRIMIDINE SYNTHASE, CHLOROPLASTIC"/>
    <property type="match status" value="1"/>
</dbReference>
<dbReference type="PANTHER" id="PTHR30557">
    <property type="entry name" value="THIAMINE BIOSYNTHESIS PROTEIN THIC"/>
    <property type="match status" value="1"/>
</dbReference>
<dbReference type="Pfam" id="PF13667">
    <property type="entry name" value="ThiC-associated"/>
    <property type="match status" value="1"/>
</dbReference>
<dbReference type="Pfam" id="PF01964">
    <property type="entry name" value="ThiC_Rad_SAM"/>
    <property type="match status" value="1"/>
</dbReference>
<dbReference type="SFLD" id="SFLDF00407">
    <property type="entry name" value="phosphomethylpyrimidine_syntha"/>
    <property type="match status" value="1"/>
</dbReference>
<dbReference type="SFLD" id="SFLDG01114">
    <property type="entry name" value="phosphomethylpyrimidine_syntha"/>
    <property type="match status" value="1"/>
</dbReference>
<dbReference type="SFLD" id="SFLDS00113">
    <property type="entry name" value="Radical_SAM_Phosphomethylpyrim"/>
    <property type="match status" value="1"/>
</dbReference>
<accession>B3QFS9</accession>
<evidence type="ECO:0000255" key="1">
    <source>
        <dbReference type="HAMAP-Rule" id="MF_00089"/>
    </source>
</evidence>
<feature type="chain" id="PRO_1000093226" description="Phosphomethylpyrimidine synthase">
    <location>
        <begin position="1"/>
        <end position="641"/>
    </location>
</feature>
<feature type="binding site" evidence="1">
    <location>
        <position position="221"/>
    </location>
    <ligand>
        <name>substrate</name>
    </ligand>
</feature>
<feature type="binding site" evidence="1">
    <location>
        <position position="250"/>
    </location>
    <ligand>
        <name>substrate</name>
    </ligand>
</feature>
<feature type="binding site" evidence="1">
    <location>
        <position position="279"/>
    </location>
    <ligand>
        <name>substrate</name>
    </ligand>
</feature>
<feature type="binding site" evidence="1">
    <location>
        <position position="315"/>
    </location>
    <ligand>
        <name>substrate</name>
    </ligand>
</feature>
<feature type="binding site" evidence="1">
    <location>
        <begin position="335"/>
        <end position="337"/>
    </location>
    <ligand>
        <name>substrate</name>
    </ligand>
</feature>
<feature type="binding site" evidence="1">
    <location>
        <begin position="376"/>
        <end position="379"/>
    </location>
    <ligand>
        <name>substrate</name>
    </ligand>
</feature>
<feature type="binding site" evidence="1">
    <location>
        <position position="415"/>
    </location>
    <ligand>
        <name>substrate</name>
    </ligand>
</feature>
<feature type="binding site" evidence="1">
    <location>
        <position position="419"/>
    </location>
    <ligand>
        <name>Zn(2+)</name>
        <dbReference type="ChEBI" id="CHEBI:29105"/>
    </ligand>
</feature>
<feature type="binding site" evidence="1">
    <location>
        <position position="442"/>
    </location>
    <ligand>
        <name>substrate</name>
    </ligand>
</feature>
<feature type="binding site" evidence="1">
    <location>
        <position position="483"/>
    </location>
    <ligand>
        <name>Zn(2+)</name>
        <dbReference type="ChEBI" id="CHEBI:29105"/>
    </ligand>
</feature>
<feature type="binding site" evidence="1">
    <location>
        <position position="563"/>
    </location>
    <ligand>
        <name>[4Fe-4S] cluster</name>
        <dbReference type="ChEBI" id="CHEBI:49883"/>
        <note>4Fe-4S-S-AdoMet</note>
    </ligand>
</feature>
<feature type="binding site" evidence="1">
    <location>
        <position position="566"/>
    </location>
    <ligand>
        <name>[4Fe-4S] cluster</name>
        <dbReference type="ChEBI" id="CHEBI:49883"/>
        <note>4Fe-4S-S-AdoMet</note>
    </ligand>
</feature>
<feature type="binding site" evidence="1">
    <location>
        <position position="571"/>
    </location>
    <ligand>
        <name>[4Fe-4S] cluster</name>
        <dbReference type="ChEBI" id="CHEBI:49883"/>
        <note>4Fe-4S-S-AdoMet</note>
    </ligand>
</feature>
<protein>
    <recommendedName>
        <fullName evidence="1">Phosphomethylpyrimidine synthase</fullName>
        <ecNumber evidence="1">4.1.99.17</ecNumber>
    </recommendedName>
    <alternativeName>
        <fullName evidence="1">Hydroxymethylpyrimidine phosphate synthase</fullName>
        <shortName evidence="1">HMP-P synthase</shortName>
        <shortName evidence="1">HMP-phosphate synthase</shortName>
        <shortName evidence="1">HMPP synthase</shortName>
    </alternativeName>
    <alternativeName>
        <fullName evidence="1">Thiamine biosynthesis protein ThiC</fullName>
    </alternativeName>
</protein>
<reference key="1">
    <citation type="submission" date="2008-05" db="EMBL/GenBank/DDBJ databases">
        <title>Complete sequence of Rhodopseudomonas palustris TIE-1.</title>
        <authorList>
            <consortium name="US DOE Joint Genome Institute"/>
            <person name="Lucas S."/>
            <person name="Copeland A."/>
            <person name="Lapidus A."/>
            <person name="Glavina del Rio T."/>
            <person name="Dalin E."/>
            <person name="Tice H."/>
            <person name="Pitluck S."/>
            <person name="Chain P."/>
            <person name="Malfatti S."/>
            <person name="Shin M."/>
            <person name="Vergez L."/>
            <person name="Lang D."/>
            <person name="Schmutz J."/>
            <person name="Larimer F."/>
            <person name="Land M."/>
            <person name="Hauser L."/>
            <person name="Kyrpides N."/>
            <person name="Mikhailova N."/>
            <person name="Emerson D."/>
            <person name="Newman D.K."/>
            <person name="Roden E."/>
            <person name="Richardson P."/>
        </authorList>
    </citation>
    <scope>NUCLEOTIDE SEQUENCE [LARGE SCALE GENOMIC DNA]</scope>
    <source>
        <strain>TIE-1</strain>
    </source>
</reference>
<gene>
    <name evidence="1" type="primary">thiC</name>
    <name type="ordered locus">Rpal_4096</name>
</gene>
<keyword id="KW-0004">4Fe-4S</keyword>
<keyword id="KW-0408">Iron</keyword>
<keyword id="KW-0411">Iron-sulfur</keyword>
<keyword id="KW-0456">Lyase</keyword>
<keyword id="KW-0479">Metal-binding</keyword>
<keyword id="KW-0949">S-adenosyl-L-methionine</keyword>
<keyword id="KW-0784">Thiamine biosynthesis</keyword>
<keyword id="KW-0862">Zinc</keyword>
<organism>
    <name type="scientific">Rhodopseudomonas palustris (strain TIE-1)</name>
    <dbReference type="NCBI Taxonomy" id="395960"/>
    <lineage>
        <taxon>Bacteria</taxon>
        <taxon>Pseudomonadati</taxon>
        <taxon>Pseudomonadota</taxon>
        <taxon>Alphaproteobacteria</taxon>
        <taxon>Hyphomicrobiales</taxon>
        <taxon>Nitrobacteraceae</taxon>
        <taxon>Rhodopseudomonas</taxon>
    </lineage>
</organism>